<dbReference type="EC" id="2.5.1.7" evidence="1"/>
<dbReference type="EMBL" id="CP000826">
    <property type="protein sequence ID" value="ABV43448.1"/>
    <property type="molecule type" value="Genomic_DNA"/>
</dbReference>
<dbReference type="SMR" id="A8GK08"/>
<dbReference type="STRING" id="399741.Spro_4354"/>
<dbReference type="KEGG" id="spe:Spro_4354"/>
<dbReference type="eggNOG" id="COG0766">
    <property type="taxonomic scope" value="Bacteria"/>
</dbReference>
<dbReference type="HOGENOM" id="CLU_027387_0_0_6"/>
<dbReference type="OrthoDB" id="9803760at2"/>
<dbReference type="UniPathway" id="UPA00219"/>
<dbReference type="GO" id="GO:0005737">
    <property type="term" value="C:cytoplasm"/>
    <property type="evidence" value="ECO:0007669"/>
    <property type="project" value="UniProtKB-SubCell"/>
</dbReference>
<dbReference type="GO" id="GO:0008760">
    <property type="term" value="F:UDP-N-acetylglucosamine 1-carboxyvinyltransferase activity"/>
    <property type="evidence" value="ECO:0007669"/>
    <property type="project" value="UniProtKB-UniRule"/>
</dbReference>
<dbReference type="GO" id="GO:0051301">
    <property type="term" value="P:cell division"/>
    <property type="evidence" value="ECO:0007669"/>
    <property type="project" value="UniProtKB-KW"/>
</dbReference>
<dbReference type="GO" id="GO:0071555">
    <property type="term" value="P:cell wall organization"/>
    <property type="evidence" value="ECO:0007669"/>
    <property type="project" value="UniProtKB-KW"/>
</dbReference>
<dbReference type="GO" id="GO:0009252">
    <property type="term" value="P:peptidoglycan biosynthetic process"/>
    <property type="evidence" value="ECO:0007669"/>
    <property type="project" value="UniProtKB-UniRule"/>
</dbReference>
<dbReference type="GO" id="GO:0008360">
    <property type="term" value="P:regulation of cell shape"/>
    <property type="evidence" value="ECO:0007669"/>
    <property type="project" value="UniProtKB-KW"/>
</dbReference>
<dbReference type="GO" id="GO:0019277">
    <property type="term" value="P:UDP-N-acetylgalactosamine biosynthetic process"/>
    <property type="evidence" value="ECO:0007669"/>
    <property type="project" value="InterPro"/>
</dbReference>
<dbReference type="CDD" id="cd01555">
    <property type="entry name" value="UdpNAET"/>
    <property type="match status" value="1"/>
</dbReference>
<dbReference type="FunFam" id="3.65.10.10:FF:000002">
    <property type="entry name" value="UDP-N-acetylglucosamine 1-carboxyvinyltransferase"/>
    <property type="match status" value="1"/>
</dbReference>
<dbReference type="Gene3D" id="3.65.10.10">
    <property type="entry name" value="Enolpyruvate transferase domain"/>
    <property type="match status" value="2"/>
</dbReference>
<dbReference type="HAMAP" id="MF_00111">
    <property type="entry name" value="MurA"/>
    <property type="match status" value="1"/>
</dbReference>
<dbReference type="InterPro" id="IPR001986">
    <property type="entry name" value="Enolpyruvate_Tfrase_dom"/>
</dbReference>
<dbReference type="InterPro" id="IPR036968">
    <property type="entry name" value="Enolpyruvate_Tfrase_sf"/>
</dbReference>
<dbReference type="InterPro" id="IPR050068">
    <property type="entry name" value="MurA_subfamily"/>
</dbReference>
<dbReference type="InterPro" id="IPR013792">
    <property type="entry name" value="RNA3'P_cycl/enolpyr_Trfase_a/b"/>
</dbReference>
<dbReference type="InterPro" id="IPR005750">
    <property type="entry name" value="UDP_GlcNAc_COvinyl_MurA"/>
</dbReference>
<dbReference type="NCBIfam" id="TIGR01072">
    <property type="entry name" value="murA"/>
    <property type="match status" value="1"/>
</dbReference>
<dbReference type="NCBIfam" id="NF006873">
    <property type="entry name" value="PRK09369.1"/>
    <property type="match status" value="1"/>
</dbReference>
<dbReference type="PANTHER" id="PTHR43783">
    <property type="entry name" value="UDP-N-ACETYLGLUCOSAMINE 1-CARBOXYVINYLTRANSFERASE"/>
    <property type="match status" value="1"/>
</dbReference>
<dbReference type="PANTHER" id="PTHR43783:SF1">
    <property type="entry name" value="UDP-N-ACETYLGLUCOSAMINE 1-CARBOXYVINYLTRANSFERASE"/>
    <property type="match status" value="1"/>
</dbReference>
<dbReference type="Pfam" id="PF00275">
    <property type="entry name" value="EPSP_synthase"/>
    <property type="match status" value="1"/>
</dbReference>
<dbReference type="SUPFAM" id="SSF55205">
    <property type="entry name" value="EPT/RTPC-like"/>
    <property type="match status" value="1"/>
</dbReference>
<feature type="chain" id="PRO_1000057733" description="UDP-N-acetylglucosamine 1-carboxyvinyltransferase">
    <location>
        <begin position="1"/>
        <end position="419"/>
    </location>
</feature>
<feature type="active site" description="Proton donor" evidence="1">
    <location>
        <position position="115"/>
    </location>
</feature>
<feature type="binding site" evidence="1">
    <location>
        <begin position="22"/>
        <end position="23"/>
    </location>
    <ligand>
        <name>phosphoenolpyruvate</name>
        <dbReference type="ChEBI" id="CHEBI:58702"/>
    </ligand>
</feature>
<feature type="binding site" evidence="1">
    <location>
        <position position="91"/>
    </location>
    <ligand>
        <name>UDP-N-acetyl-alpha-D-glucosamine</name>
        <dbReference type="ChEBI" id="CHEBI:57705"/>
    </ligand>
</feature>
<feature type="binding site" evidence="1">
    <location>
        <begin position="120"/>
        <end position="124"/>
    </location>
    <ligand>
        <name>UDP-N-acetyl-alpha-D-glucosamine</name>
        <dbReference type="ChEBI" id="CHEBI:57705"/>
    </ligand>
</feature>
<feature type="binding site" evidence="1">
    <location>
        <begin position="160"/>
        <end position="163"/>
    </location>
    <ligand>
        <name>UDP-N-acetyl-alpha-D-glucosamine</name>
        <dbReference type="ChEBI" id="CHEBI:57705"/>
    </ligand>
</feature>
<feature type="binding site" evidence="1">
    <location>
        <position position="305"/>
    </location>
    <ligand>
        <name>UDP-N-acetyl-alpha-D-glucosamine</name>
        <dbReference type="ChEBI" id="CHEBI:57705"/>
    </ligand>
</feature>
<feature type="binding site" evidence="1">
    <location>
        <position position="327"/>
    </location>
    <ligand>
        <name>UDP-N-acetyl-alpha-D-glucosamine</name>
        <dbReference type="ChEBI" id="CHEBI:57705"/>
    </ligand>
</feature>
<feature type="modified residue" description="2-(S-cysteinyl)pyruvic acid O-phosphothioketal" evidence="1">
    <location>
        <position position="115"/>
    </location>
</feature>
<name>MURA_SERP5</name>
<accession>A8GK08</accession>
<keyword id="KW-0131">Cell cycle</keyword>
<keyword id="KW-0132">Cell division</keyword>
<keyword id="KW-0133">Cell shape</keyword>
<keyword id="KW-0961">Cell wall biogenesis/degradation</keyword>
<keyword id="KW-0963">Cytoplasm</keyword>
<keyword id="KW-0573">Peptidoglycan synthesis</keyword>
<keyword id="KW-0670">Pyruvate</keyword>
<keyword id="KW-0808">Transferase</keyword>
<evidence type="ECO:0000255" key="1">
    <source>
        <dbReference type="HAMAP-Rule" id="MF_00111"/>
    </source>
</evidence>
<sequence length="419" mass="44668">MDKFRVQGRTRLSGEVAISGAKNAALPILFAALLAEEPVELQNVPKLKDIDTTIKLLNQLGTKIERNGSVFVDASGVNEFCAPYDLVKTMRASIWALGPLVARFGRGQVSLPGGCAIGARPVDLHITGLEQLGAEIKLEEGYVKASVDGRLKGAHIVMDKVSVGATVTIMSAATLATGTTVIENAAREPEIVDTANFLNTLGAKITGAGSDRITIEGVERLGGGVYRVLPDRIETGTFLIAAAVSGGKVMCRDTRPDTLDAVLAKLREAGADIEVGEDWISLDMHGKRPKAVTIRTAPHPGFPTDMQAQFSLLNLVAEGTGVITETIFENRFMHVPELIRMGAHAEIESNTVICHGVEQLSGAQVMATDLRASASLVIAGCIADGVTVVDRIYHIDRGYERIEDKLRALGANIERVKGE</sequence>
<comment type="function">
    <text evidence="1">Cell wall formation. Adds enolpyruvyl to UDP-N-acetylglucosamine.</text>
</comment>
<comment type="catalytic activity">
    <reaction evidence="1">
        <text>phosphoenolpyruvate + UDP-N-acetyl-alpha-D-glucosamine = UDP-N-acetyl-3-O-(1-carboxyvinyl)-alpha-D-glucosamine + phosphate</text>
        <dbReference type="Rhea" id="RHEA:18681"/>
        <dbReference type="ChEBI" id="CHEBI:43474"/>
        <dbReference type="ChEBI" id="CHEBI:57705"/>
        <dbReference type="ChEBI" id="CHEBI:58702"/>
        <dbReference type="ChEBI" id="CHEBI:68483"/>
        <dbReference type="EC" id="2.5.1.7"/>
    </reaction>
</comment>
<comment type="pathway">
    <text evidence="1">Cell wall biogenesis; peptidoglycan biosynthesis.</text>
</comment>
<comment type="subcellular location">
    <subcellularLocation>
        <location evidence="1">Cytoplasm</location>
    </subcellularLocation>
</comment>
<comment type="similarity">
    <text evidence="1">Belongs to the EPSP synthase family. MurA subfamily.</text>
</comment>
<proteinExistence type="inferred from homology"/>
<gene>
    <name evidence="1" type="primary">murA</name>
    <name type="ordered locus">Spro_4354</name>
</gene>
<protein>
    <recommendedName>
        <fullName evidence="1">UDP-N-acetylglucosamine 1-carboxyvinyltransferase</fullName>
        <ecNumber evidence="1">2.5.1.7</ecNumber>
    </recommendedName>
    <alternativeName>
        <fullName evidence="1">Enoylpyruvate transferase</fullName>
    </alternativeName>
    <alternativeName>
        <fullName evidence="1">UDP-N-acetylglucosamine enolpyruvyl transferase</fullName>
        <shortName evidence="1">EPT</shortName>
    </alternativeName>
</protein>
<organism>
    <name type="scientific">Serratia proteamaculans (strain 568)</name>
    <dbReference type="NCBI Taxonomy" id="399741"/>
    <lineage>
        <taxon>Bacteria</taxon>
        <taxon>Pseudomonadati</taxon>
        <taxon>Pseudomonadota</taxon>
        <taxon>Gammaproteobacteria</taxon>
        <taxon>Enterobacterales</taxon>
        <taxon>Yersiniaceae</taxon>
        <taxon>Serratia</taxon>
    </lineage>
</organism>
<reference key="1">
    <citation type="submission" date="2007-09" db="EMBL/GenBank/DDBJ databases">
        <title>Complete sequence of chromosome of Serratia proteamaculans 568.</title>
        <authorList>
            <consortium name="US DOE Joint Genome Institute"/>
            <person name="Copeland A."/>
            <person name="Lucas S."/>
            <person name="Lapidus A."/>
            <person name="Barry K."/>
            <person name="Glavina del Rio T."/>
            <person name="Dalin E."/>
            <person name="Tice H."/>
            <person name="Pitluck S."/>
            <person name="Chain P."/>
            <person name="Malfatti S."/>
            <person name="Shin M."/>
            <person name="Vergez L."/>
            <person name="Schmutz J."/>
            <person name="Larimer F."/>
            <person name="Land M."/>
            <person name="Hauser L."/>
            <person name="Kyrpides N."/>
            <person name="Kim E."/>
            <person name="Taghavi S."/>
            <person name="Newman L."/>
            <person name="Vangronsveld J."/>
            <person name="van der Lelie D."/>
            <person name="Richardson P."/>
        </authorList>
    </citation>
    <scope>NUCLEOTIDE SEQUENCE [LARGE SCALE GENOMIC DNA]</scope>
    <source>
        <strain>568</strain>
    </source>
</reference>